<protein>
    <recommendedName>
        <fullName evidence="1">Dihydroorotate dehydrogenase (quinone)</fullName>
        <ecNumber evidence="1">1.3.5.2</ecNumber>
    </recommendedName>
    <alternativeName>
        <fullName evidence="1">DHOdehase</fullName>
        <shortName evidence="1">DHOD</shortName>
        <shortName evidence="1">DHODase</shortName>
    </alternativeName>
    <alternativeName>
        <fullName evidence="1">Dihydroorotate oxidase</fullName>
    </alternativeName>
</protein>
<dbReference type="EC" id="1.3.5.2" evidence="1"/>
<dbReference type="EMBL" id="CP001344">
    <property type="protein sequence ID" value="ACL43211.1"/>
    <property type="molecule type" value="Genomic_DNA"/>
</dbReference>
<dbReference type="SMR" id="B8HW33"/>
<dbReference type="STRING" id="395961.Cyan7425_0825"/>
<dbReference type="KEGG" id="cyn:Cyan7425_0825"/>
<dbReference type="eggNOG" id="COG0167">
    <property type="taxonomic scope" value="Bacteria"/>
</dbReference>
<dbReference type="HOGENOM" id="CLU_013640_2_0_3"/>
<dbReference type="OrthoDB" id="9802377at2"/>
<dbReference type="UniPathway" id="UPA00070">
    <property type="reaction ID" value="UER00946"/>
</dbReference>
<dbReference type="GO" id="GO:0005737">
    <property type="term" value="C:cytoplasm"/>
    <property type="evidence" value="ECO:0007669"/>
    <property type="project" value="InterPro"/>
</dbReference>
<dbReference type="GO" id="GO:0005886">
    <property type="term" value="C:plasma membrane"/>
    <property type="evidence" value="ECO:0007669"/>
    <property type="project" value="UniProtKB-SubCell"/>
</dbReference>
<dbReference type="GO" id="GO:0106430">
    <property type="term" value="F:dihydroorotate dehydrogenase (quinone) activity"/>
    <property type="evidence" value="ECO:0007669"/>
    <property type="project" value="UniProtKB-EC"/>
</dbReference>
<dbReference type="GO" id="GO:0006207">
    <property type="term" value="P:'de novo' pyrimidine nucleobase biosynthetic process"/>
    <property type="evidence" value="ECO:0007669"/>
    <property type="project" value="InterPro"/>
</dbReference>
<dbReference type="GO" id="GO:0044205">
    <property type="term" value="P:'de novo' UMP biosynthetic process"/>
    <property type="evidence" value="ECO:0007669"/>
    <property type="project" value="UniProtKB-UniRule"/>
</dbReference>
<dbReference type="CDD" id="cd04738">
    <property type="entry name" value="DHOD_2_like"/>
    <property type="match status" value="1"/>
</dbReference>
<dbReference type="Gene3D" id="3.20.20.70">
    <property type="entry name" value="Aldolase class I"/>
    <property type="match status" value="1"/>
</dbReference>
<dbReference type="HAMAP" id="MF_00225">
    <property type="entry name" value="DHO_dh_type2"/>
    <property type="match status" value="1"/>
</dbReference>
<dbReference type="InterPro" id="IPR013785">
    <property type="entry name" value="Aldolase_TIM"/>
</dbReference>
<dbReference type="InterPro" id="IPR050074">
    <property type="entry name" value="DHO_dehydrogenase"/>
</dbReference>
<dbReference type="InterPro" id="IPR005719">
    <property type="entry name" value="Dihydroorotate_DH_2"/>
</dbReference>
<dbReference type="InterPro" id="IPR005720">
    <property type="entry name" value="Dihydroorotate_DH_cat"/>
</dbReference>
<dbReference type="InterPro" id="IPR001295">
    <property type="entry name" value="Dihydroorotate_DH_CS"/>
</dbReference>
<dbReference type="NCBIfam" id="NF003651">
    <property type="entry name" value="PRK05286.2-4"/>
    <property type="match status" value="1"/>
</dbReference>
<dbReference type="NCBIfam" id="NF003652">
    <property type="entry name" value="PRK05286.2-5"/>
    <property type="match status" value="1"/>
</dbReference>
<dbReference type="NCBIfam" id="TIGR01036">
    <property type="entry name" value="pyrD_sub2"/>
    <property type="match status" value="1"/>
</dbReference>
<dbReference type="PANTHER" id="PTHR48109:SF4">
    <property type="entry name" value="DIHYDROOROTATE DEHYDROGENASE (QUINONE), MITOCHONDRIAL"/>
    <property type="match status" value="1"/>
</dbReference>
<dbReference type="PANTHER" id="PTHR48109">
    <property type="entry name" value="DIHYDROOROTATE DEHYDROGENASE (QUINONE), MITOCHONDRIAL-RELATED"/>
    <property type="match status" value="1"/>
</dbReference>
<dbReference type="Pfam" id="PF01180">
    <property type="entry name" value="DHO_dh"/>
    <property type="match status" value="1"/>
</dbReference>
<dbReference type="SUPFAM" id="SSF51395">
    <property type="entry name" value="FMN-linked oxidoreductases"/>
    <property type="match status" value="1"/>
</dbReference>
<dbReference type="PROSITE" id="PS00911">
    <property type="entry name" value="DHODEHASE_1"/>
    <property type="match status" value="1"/>
</dbReference>
<dbReference type="PROSITE" id="PS00912">
    <property type="entry name" value="DHODEHASE_2"/>
    <property type="match status" value="1"/>
</dbReference>
<proteinExistence type="inferred from homology"/>
<sequence length="375" mass="41003">MNVYQSLLQPFVFQTLRADPETVKLQLLRLGESIERHSDRPPARWIKQQLAQTFSLPTPELSQQLWGLTFPNPIGLAAGLDKDGVAAGLWGSFGFGFAEVGTVTYHPQPGNPRPRLFRLPADRAGINRMGFNNRGAAALAQTLEQAQKRSARTIPLGINLGKSKVTPLEEAVEDYLGSFRLLQAWGDYFVINVSSPNTPGLRSLQTAANLEPILSALQNENQARRPLLLKISPDLAWEDLATIIDLVKTYQWAGLIATNTTIARPELQTKVIPQTGKSPQEEAGGLSGAPLKQRSTEVIRFIHQQTGGQLPIIGVGGVFTAADAWEKIMAGATLIQVYTGWIYEGPGMVKQLLTGLQTELQQRGLDCLAALDRQP</sequence>
<gene>
    <name evidence="1" type="primary">pyrD</name>
    <name type="ordered locus">Cyan7425_0825</name>
</gene>
<organism>
    <name type="scientific">Cyanothece sp. (strain PCC 7425 / ATCC 29141)</name>
    <dbReference type="NCBI Taxonomy" id="395961"/>
    <lineage>
        <taxon>Bacteria</taxon>
        <taxon>Bacillati</taxon>
        <taxon>Cyanobacteriota</taxon>
        <taxon>Cyanophyceae</taxon>
        <taxon>Gomontiellales</taxon>
        <taxon>Cyanothecaceae</taxon>
        <taxon>Cyanothece</taxon>
    </lineage>
</organism>
<feature type="chain" id="PRO_1000195066" description="Dihydroorotate dehydrogenase (quinone)">
    <location>
        <begin position="1"/>
        <end position="375"/>
    </location>
</feature>
<feature type="active site" description="Nucleophile" evidence="1">
    <location>
        <position position="195"/>
    </location>
</feature>
<feature type="binding site" evidence="1">
    <location>
        <begin position="78"/>
        <end position="82"/>
    </location>
    <ligand>
        <name>FMN</name>
        <dbReference type="ChEBI" id="CHEBI:58210"/>
    </ligand>
</feature>
<feature type="binding site" evidence="1">
    <location>
        <position position="82"/>
    </location>
    <ligand>
        <name>substrate</name>
    </ligand>
</feature>
<feature type="binding site" evidence="1">
    <location>
        <position position="102"/>
    </location>
    <ligand>
        <name>FMN</name>
        <dbReference type="ChEBI" id="CHEBI:58210"/>
    </ligand>
</feature>
<feature type="binding site" evidence="1">
    <location>
        <begin position="127"/>
        <end position="131"/>
    </location>
    <ligand>
        <name>substrate</name>
    </ligand>
</feature>
<feature type="binding site" evidence="1">
    <location>
        <position position="159"/>
    </location>
    <ligand>
        <name>FMN</name>
        <dbReference type="ChEBI" id="CHEBI:58210"/>
    </ligand>
</feature>
<feature type="binding site" evidence="1">
    <location>
        <position position="192"/>
    </location>
    <ligand>
        <name>FMN</name>
        <dbReference type="ChEBI" id="CHEBI:58210"/>
    </ligand>
</feature>
<feature type="binding site" evidence="1">
    <location>
        <position position="192"/>
    </location>
    <ligand>
        <name>substrate</name>
    </ligand>
</feature>
<feature type="binding site" evidence="1">
    <location>
        <position position="197"/>
    </location>
    <ligand>
        <name>substrate</name>
    </ligand>
</feature>
<feature type="binding site" evidence="1">
    <location>
        <position position="230"/>
    </location>
    <ligand>
        <name>FMN</name>
        <dbReference type="ChEBI" id="CHEBI:58210"/>
    </ligand>
</feature>
<feature type="binding site" evidence="1">
    <location>
        <position position="258"/>
    </location>
    <ligand>
        <name>FMN</name>
        <dbReference type="ChEBI" id="CHEBI:58210"/>
    </ligand>
</feature>
<feature type="binding site" evidence="1">
    <location>
        <begin position="259"/>
        <end position="260"/>
    </location>
    <ligand>
        <name>substrate</name>
    </ligand>
</feature>
<feature type="binding site" evidence="1">
    <location>
        <position position="288"/>
    </location>
    <ligand>
        <name>FMN</name>
        <dbReference type="ChEBI" id="CHEBI:58210"/>
    </ligand>
</feature>
<feature type="binding site" evidence="1">
    <location>
        <position position="317"/>
    </location>
    <ligand>
        <name>FMN</name>
        <dbReference type="ChEBI" id="CHEBI:58210"/>
    </ligand>
</feature>
<feature type="binding site" evidence="1">
    <location>
        <begin position="338"/>
        <end position="339"/>
    </location>
    <ligand>
        <name>FMN</name>
        <dbReference type="ChEBI" id="CHEBI:58210"/>
    </ligand>
</feature>
<reference key="1">
    <citation type="journal article" date="2011" name="MBio">
        <title>Novel metabolic attributes of the genus Cyanothece, comprising a group of unicellular nitrogen-fixing Cyanobacteria.</title>
        <authorList>
            <person name="Bandyopadhyay A."/>
            <person name="Elvitigala T."/>
            <person name="Welsh E."/>
            <person name="Stockel J."/>
            <person name="Liberton M."/>
            <person name="Min H."/>
            <person name="Sherman L.A."/>
            <person name="Pakrasi H.B."/>
        </authorList>
    </citation>
    <scope>NUCLEOTIDE SEQUENCE [LARGE SCALE GENOMIC DNA]</scope>
    <source>
        <strain>PCC 7425 / ATCC 29141</strain>
    </source>
</reference>
<comment type="function">
    <text evidence="1">Catalyzes the conversion of dihydroorotate to orotate with quinone as electron acceptor.</text>
</comment>
<comment type="catalytic activity">
    <reaction evidence="1">
        <text>(S)-dihydroorotate + a quinone = orotate + a quinol</text>
        <dbReference type="Rhea" id="RHEA:30187"/>
        <dbReference type="ChEBI" id="CHEBI:24646"/>
        <dbReference type="ChEBI" id="CHEBI:30839"/>
        <dbReference type="ChEBI" id="CHEBI:30864"/>
        <dbReference type="ChEBI" id="CHEBI:132124"/>
        <dbReference type="EC" id="1.3.5.2"/>
    </reaction>
</comment>
<comment type="cofactor">
    <cofactor evidence="1">
        <name>FMN</name>
        <dbReference type="ChEBI" id="CHEBI:58210"/>
    </cofactor>
    <text evidence="1">Binds 1 FMN per subunit.</text>
</comment>
<comment type="pathway">
    <text evidence="1">Pyrimidine metabolism; UMP biosynthesis via de novo pathway; orotate from (S)-dihydroorotate (quinone route): step 1/1.</text>
</comment>
<comment type="subunit">
    <text evidence="1">Monomer.</text>
</comment>
<comment type="subcellular location">
    <subcellularLocation>
        <location evidence="1">Cell membrane</location>
        <topology evidence="1">Peripheral membrane protein</topology>
    </subcellularLocation>
</comment>
<comment type="similarity">
    <text evidence="1">Belongs to the dihydroorotate dehydrogenase family. Type 2 subfamily.</text>
</comment>
<keyword id="KW-1003">Cell membrane</keyword>
<keyword id="KW-0285">Flavoprotein</keyword>
<keyword id="KW-0288">FMN</keyword>
<keyword id="KW-0472">Membrane</keyword>
<keyword id="KW-0560">Oxidoreductase</keyword>
<keyword id="KW-0665">Pyrimidine biosynthesis</keyword>
<name>PYRD_CYAP4</name>
<evidence type="ECO:0000255" key="1">
    <source>
        <dbReference type="HAMAP-Rule" id="MF_00225"/>
    </source>
</evidence>
<accession>B8HW33</accession>